<proteinExistence type="evidence at protein level"/>
<sequence length="949" mass="104373">MTPVAVTSVAPVDIIHDLKRPKRATESSPITLPDVFSRAVSQYPNHELSFITSSVHDSSMHTTTFTEFNQRVRALAQAMLAWDKPAGAVIVIYLTEHEDNVAAVWACLLSGYVPCLQPALSAQQAHKEGHVAHIKNLFSSATWLTNESGAEQVQSISGLDIHLLSELKASAGVGMDFSAHQPNPDDEAILFLTSGSTGFSKAVVHTHRTILAACHAKGENYGLTSESKIMNWVGFDHVAGSLEMHIAPLLYGASQLHVHVSAILSDPLCFLRLIEENSIQLAFASNFLLAKLTRDLEKRSDLFGKFDLSSIKRINSGGEAVVSSTAQAFARTLKNLAKDGDASFVISAGFGMTETCAGCIYDSINVLETPPSYEFLELGTPVTGCEMRVVNPEDGVTPRPDGESGELQVRGPMVFVRYYNNPEATSSSFVEGGWYRTGDVGIVEKGKMRLSGRIKDTVVVHGVSYGIPELETYLQTVEGVTHSFLAAAPYRAPGQETEGFVVFYSPTFGLDSEDAPVKLYATHCAIRDVSVKLITLPPQQIIPIPINQMERTTLGKLSRARLVNMFKQGELAKHIDRAKELIGIARGASFVALSTETEKTLAGIYAVILDLSVGDMSANDNLFELGGTSIDVIRLKREGESAFDLPEIPTIRILKHPVISNLAKYVDSLVSKDVSEEEYDPIVPLQLTGKKTPIFMVHPGMADVLIFVNLAKYFQNERPFYALRARGFEPGQPFFTTTGEIVSCYTAAVKRTQPHGPYAIAGYSYGGVIAFEIAKRLEAMGDEVKFTGVIDIIAHRARENDLTLGLLTLSHLLGLVSKQDINDLAPSMRPLTRKEQLELVWKLSPPERLVELQLTPEKLKHWVNVSGSLMECGKDYEPASSVSVMDVFYANPSRGSKEAWLHRLKRWTDYSRSEPSYIDVPGHHYTLMDFDHVARFQKIFRARLEARGL</sequence>
<evidence type="ECO:0000255" key="1"/>
<evidence type="ECO:0000255" key="2">
    <source>
        <dbReference type="PROSITE-ProRule" id="PRU00258"/>
    </source>
</evidence>
<evidence type="ECO:0000269" key="3">
    <source>
    </source>
</evidence>
<evidence type="ECO:0000305" key="4"/>
<protein>
    <recommendedName>
        <fullName>Inactive atromentin synthetase invA3</fullName>
    </recommendedName>
    <alternativeName>
        <fullName>Nonribosomal peptide synthase-like enzyme invA3</fullName>
        <shortName>NRPS-like</shortName>
    </alternativeName>
</protein>
<feature type="chain" id="PRO_0000442622" description="Inactive atromentin synthetase invA3">
    <location>
        <begin position="1"/>
        <end position="949"/>
    </location>
</feature>
<feature type="domain" description="Carrier" evidence="2">
    <location>
        <begin position="592"/>
        <end position="670"/>
    </location>
</feature>
<feature type="region of interest" description="Adenylation (A) domain" evidence="1">
    <location>
        <begin position="38"/>
        <end position="460"/>
    </location>
</feature>
<feature type="region of interest" description="Thiolation and peptide carrier (T) domain" evidence="1">
    <location>
        <begin position="597"/>
        <end position="667"/>
    </location>
</feature>
<feature type="region of interest" description="Thioesterase (TE) domain" evidence="1">
    <location>
        <begin position="693"/>
        <end position="934"/>
    </location>
</feature>
<feature type="modified residue" description="O-(pantetheine 4'-phosphoryl)serine" evidence="2">
    <location>
        <position position="629"/>
    </location>
</feature>
<accession>A0A0S2E7V8</accession>
<keyword id="KW-0596">Phosphopantetheine</keyword>
<keyword id="KW-0597">Phosphoprotein</keyword>
<keyword id="KW-0808">Transferase</keyword>
<dbReference type="EMBL" id="KT958231">
    <property type="protein sequence ID" value="ALN66883.1"/>
    <property type="molecule type" value="mRNA"/>
</dbReference>
<dbReference type="SMR" id="A0A0S2E7V8"/>
<dbReference type="ESTHER" id="paxin-inva3">
    <property type="family name" value="Thioesterase"/>
</dbReference>
<dbReference type="GO" id="GO:0016878">
    <property type="term" value="F:acid-thiol ligase activity"/>
    <property type="evidence" value="ECO:0007669"/>
    <property type="project" value="UniProtKB-ARBA"/>
</dbReference>
<dbReference type="GO" id="GO:0016740">
    <property type="term" value="F:transferase activity"/>
    <property type="evidence" value="ECO:0007669"/>
    <property type="project" value="UniProtKB-KW"/>
</dbReference>
<dbReference type="GO" id="GO:0009058">
    <property type="term" value="P:biosynthetic process"/>
    <property type="evidence" value="ECO:0007669"/>
    <property type="project" value="InterPro"/>
</dbReference>
<dbReference type="Gene3D" id="3.30.300.30">
    <property type="match status" value="1"/>
</dbReference>
<dbReference type="Gene3D" id="1.10.1200.10">
    <property type="entry name" value="ACP-like"/>
    <property type="match status" value="1"/>
</dbReference>
<dbReference type="Gene3D" id="3.40.50.1820">
    <property type="entry name" value="alpha/beta hydrolase"/>
    <property type="match status" value="1"/>
</dbReference>
<dbReference type="Gene3D" id="3.40.50.12780">
    <property type="entry name" value="N-terminal domain of ligase-like"/>
    <property type="match status" value="1"/>
</dbReference>
<dbReference type="InterPro" id="IPR029058">
    <property type="entry name" value="AB_hydrolase_fold"/>
</dbReference>
<dbReference type="InterPro" id="IPR036736">
    <property type="entry name" value="ACP-like_sf"/>
</dbReference>
<dbReference type="InterPro" id="IPR045851">
    <property type="entry name" value="AMP-bd_C_sf"/>
</dbReference>
<dbReference type="InterPro" id="IPR020845">
    <property type="entry name" value="AMP-binding_CS"/>
</dbReference>
<dbReference type="InterPro" id="IPR000873">
    <property type="entry name" value="AMP-dep_synth/lig_dom"/>
</dbReference>
<dbReference type="InterPro" id="IPR042099">
    <property type="entry name" value="ANL_N_sf"/>
</dbReference>
<dbReference type="InterPro" id="IPR050237">
    <property type="entry name" value="ATP-dep_AMP-bd_enzyme"/>
</dbReference>
<dbReference type="InterPro" id="IPR020802">
    <property type="entry name" value="PKS_thioesterase"/>
</dbReference>
<dbReference type="InterPro" id="IPR009081">
    <property type="entry name" value="PP-bd_ACP"/>
</dbReference>
<dbReference type="InterPro" id="IPR001031">
    <property type="entry name" value="Thioesterase"/>
</dbReference>
<dbReference type="PANTHER" id="PTHR43767">
    <property type="entry name" value="LONG-CHAIN-FATTY-ACID--COA LIGASE"/>
    <property type="match status" value="1"/>
</dbReference>
<dbReference type="PANTHER" id="PTHR43767:SF1">
    <property type="entry name" value="NONRIBOSOMAL PEPTIDE SYNTHASE PES1 (EUROFUNG)-RELATED"/>
    <property type="match status" value="1"/>
</dbReference>
<dbReference type="Pfam" id="PF00501">
    <property type="entry name" value="AMP-binding"/>
    <property type="match status" value="1"/>
</dbReference>
<dbReference type="Pfam" id="PF00550">
    <property type="entry name" value="PP-binding"/>
    <property type="match status" value="1"/>
</dbReference>
<dbReference type="Pfam" id="PF00975">
    <property type="entry name" value="Thioesterase"/>
    <property type="match status" value="1"/>
</dbReference>
<dbReference type="SMART" id="SM00824">
    <property type="entry name" value="PKS_TE"/>
    <property type="match status" value="1"/>
</dbReference>
<dbReference type="SUPFAM" id="SSF56801">
    <property type="entry name" value="Acetyl-CoA synthetase-like"/>
    <property type="match status" value="1"/>
</dbReference>
<dbReference type="SUPFAM" id="SSF47336">
    <property type="entry name" value="ACP-like"/>
    <property type="match status" value="1"/>
</dbReference>
<dbReference type="SUPFAM" id="SSF53474">
    <property type="entry name" value="alpha/beta-Hydrolases"/>
    <property type="match status" value="1"/>
</dbReference>
<dbReference type="PROSITE" id="PS00455">
    <property type="entry name" value="AMP_BINDING"/>
    <property type="match status" value="1"/>
</dbReference>
<dbReference type="PROSITE" id="PS50075">
    <property type="entry name" value="CARRIER"/>
    <property type="match status" value="1"/>
</dbReference>
<gene>
    <name type="primary">invA3</name>
</gene>
<reference key="1">
    <citation type="journal article" date="2015" name="Chem. Biol.">
        <title>Three redundant synthetases secure redox-active pigment production in the basidiomycete Paxillus involutus.</title>
        <authorList>
            <person name="Braesel J."/>
            <person name="Gotze S."/>
            <person name="Shah F."/>
            <person name="Heine D."/>
            <person name="Tauber J."/>
            <person name="Hertweck C."/>
            <person name="Tunlid A."/>
            <person name="Stallforth P."/>
            <person name="Hoffmeister D."/>
        </authorList>
    </citation>
    <scope>NUCLEOTIDE SEQUENCE [MRNA]</scope>
    <scope>FUNCTION</scope>
    <scope>BIOPHYSICOCHEMICAL PROPERTIES</scope>
    <source>
        <strain>ATCC MYA-4647</strain>
    </source>
</reference>
<name>INVA3_PAXIN</name>
<comment type="function">
    <text evidence="3">Inactive atromentin synthetase homolog. While the invA3 adenylation (A) domain is capable of adenylating 4-hydroxyphenylpyruvate (4-HPP), the invA3 enzyme is inactive because of its non-functional thioesterase (TE) domain.</text>
</comment>
<comment type="biophysicochemical properties">
    <phDependence>
        <text evidence="3">Optimum pH is 6.8.</text>
    </phDependence>
    <temperatureDependence>
        <text evidence="3">Optimum temperature is 20 degrees Celsius.</text>
    </temperatureDependence>
</comment>
<comment type="similarity">
    <text evidence="4">Belongs to the ATP-dependent AMP-binding enzyme family.</text>
</comment>
<organism>
    <name type="scientific">Paxillus involutus</name>
    <name type="common">Naked brimcap</name>
    <dbReference type="NCBI Taxonomy" id="71150"/>
    <lineage>
        <taxon>Eukaryota</taxon>
        <taxon>Fungi</taxon>
        <taxon>Dikarya</taxon>
        <taxon>Basidiomycota</taxon>
        <taxon>Agaricomycotina</taxon>
        <taxon>Agaricomycetes</taxon>
        <taxon>Agaricomycetidae</taxon>
        <taxon>Boletales</taxon>
        <taxon>Paxilineae</taxon>
        <taxon>Paxillaceae</taxon>
        <taxon>Paxillus</taxon>
    </lineage>
</organism>